<comment type="function">
    <text evidence="1">Required for the formation of a threonylcarbamoyl group on adenosine at position 37 (t(6)A37) in tRNAs that read codons beginning with adenine. Is involved in the transfer of the threonylcarbamoyl moiety of threonylcarbamoyl-AMP (TC-AMP) to the N6 group of A37, together with TsaE and TsaB. TsaD likely plays a direct catalytic role in this reaction.</text>
</comment>
<comment type="catalytic activity">
    <reaction evidence="1">
        <text>L-threonylcarbamoyladenylate + adenosine(37) in tRNA = N(6)-L-threonylcarbamoyladenosine(37) in tRNA + AMP + H(+)</text>
        <dbReference type="Rhea" id="RHEA:37059"/>
        <dbReference type="Rhea" id="RHEA-COMP:10162"/>
        <dbReference type="Rhea" id="RHEA-COMP:10163"/>
        <dbReference type="ChEBI" id="CHEBI:15378"/>
        <dbReference type="ChEBI" id="CHEBI:73682"/>
        <dbReference type="ChEBI" id="CHEBI:74411"/>
        <dbReference type="ChEBI" id="CHEBI:74418"/>
        <dbReference type="ChEBI" id="CHEBI:456215"/>
        <dbReference type="EC" id="2.3.1.234"/>
    </reaction>
</comment>
<comment type="cofactor">
    <cofactor evidence="1">
        <name>Fe(2+)</name>
        <dbReference type="ChEBI" id="CHEBI:29033"/>
    </cofactor>
    <text evidence="1">Binds 1 Fe(2+) ion per subunit.</text>
</comment>
<comment type="subcellular location">
    <subcellularLocation>
        <location evidence="1">Cytoplasm</location>
    </subcellularLocation>
</comment>
<comment type="similarity">
    <text evidence="1">Belongs to the KAE1 / TsaD family.</text>
</comment>
<keyword id="KW-0012">Acyltransferase</keyword>
<keyword id="KW-0963">Cytoplasm</keyword>
<keyword id="KW-0408">Iron</keyword>
<keyword id="KW-0479">Metal-binding</keyword>
<keyword id="KW-0808">Transferase</keyword>
<keyword id="KW-0819">tRNA processing</keyword>
<gene>
    <name evidence="1" type="primary">tsaD</name>
    <name type="synonym">gcp</name>
    <name type="ordered locus">HPP12_1575</name>
</gene>
<reference key="1">
    <citation type="submission" date="2008-10" db="EMBL/GenBank/DDBJ databases">
        <title>The complete genome sequence of Helicobacter pylori strain P12.</title>
        <authorList>
            <person name="Fischer W."/>
            <person name="Windhager L."/>
            <person name="Karnholz A."/>
            <person name="Zeiller M."/>
            <person name="Zimmer R."/>
            <person name="Haas R."/>
        </authorList>
    </citation>
    <scope>NUCLEOTIDE SEQUENCE [LARGE SCALE GENOMIC DNA]</scope>
    <source>
        <strain>P12</strain>
    </source>
</reference>
<name>TSAD_HELP2</name>
<organism>
    <name type="scientific">Helicobacter pylori (strain P12)</name>
    <dbReference type="NCBI Taxonomy" id="570508"/>
    <lineage>
        <taxon>Bacteria</taxon>
        <taxon>Pseudomonadati</taxon>
        <taxon>Campylobacterota</taxon>
        <taxon>Epsilonproteobacteria</taxon>
        <taxon>Campylobacterales</taxon>
        <taxon>Helicobacteraceae</taxon>
        <taxon>Helicobacter</taxon>
    </lineage>
</organism>
<feature type="chain" id="PRO_1000145986" description="tRNA N6-adenosine threonylcarbamoyltransferase">
    <location>
        <begin position="1"/>
        <end position="340"/>
    </location>
</feature>
<feature type="binding site" evidence="1">
    <location>
        <position position="111"/>
    </location>
    <ligand>
        <name>Fe cation</name>
        <dbReference type="ChEBI" id="CHEBI:24875"/>
    </ligand>
</feature>
<feature type="binding site" evidence="1">
    <location>
        <position position="115"/>
    </location>
    <ligand>
        <name>Fe cation</name>
        <dbReference type="ChEBI" id="CHEBI:24875"/>
    </ligand>
</feature>
<feature type="binding site" evidence="1">
    <location>
        <begin position="134"/>
        <end position="138"/>
    </location>
    <ligand>
        <name>substrate</name>
    </ligand>
</feature>
<feature type="binding site" evidence="1">
    <location>
        <position position="167"/>
    </location>
    <ligand>
        <name>substrate</name>
    </ligand>
</feature>
<feature type="binding site" evidence="1">
    <location>
        <position position="180"/>
    </location>
    <ligand>
        <name>substrate</name>
    </ligand>
</feature>
<feature type="binding site" evidence="1">
    <location>
        <position position="276"/>
    </location>
    <ligand>
        <name>substrate</name>
    </ligand>
</feature>
<feature type="binding site" evidence="1">
    <location>
        <position position="304"/>
    </location>
    <ligand>
        <name>Fe cation</name>
        <dbReference type="ChEBI" id="CHEBI:24875"/>
    </ligand>
</feature>
<accession>B6JP93</accession>
<dbReference type="EC" id="2.3.1.234" evidence="1"/>
<dbReference type="EMBL" id="CP001217">
    <property type="protein sequence ID" value="ACJ08721.1"/>
    <property type="molecule type" value="Genomic_DNA"/>
</dbReference>
<dbReference type="SMR" id="B6JP93"/>
<dbReference type="KEGG" id="hpp:HPP12_1575"/>
<dbReference type="HOGENOM" id="CLU_023208_0_3_7"/>
<dbReference type="Proteomes" id="UP000008198">
    <property type="component" value="Chromosome"/>
</dbReference>
<dbReference type="GO" id="GO:0005737">
    <property type="term" value="C:cytoplasm"/>
    <property type="evidence" value="ECO:0007669"/>
    <property type="project" value="UniProtKB-SubCell"/>
</dbReference>
<dbReference type="GO" id="GO:0005506">
    <property type="term" value="F:iron ion binding"/>
    <property type="evidence" value="ECO:0007669"/>
    <property type="project" value="UniProtKB-UniRule"/>
</dbReference>
<dbReference type="GO" id="GO:0061711">
    <property type="term" value="F:N(6)-L-threonylcarbamoyladenine synthase activity"/>
    <property type="evidence" value="ECO:0007669"/>
    <property type="project" value="UniProtKB-EC"/>
</dbReference>
<dbReference type="GO" id="GO:0002949">
    <property type="term" value="P:tRNA threonylcarbamoyladenosine modification"/>
    <property type="evidence" value="ECO:0007669"/>
    <property type="project" value="UniProtKB-UniRule"/>
</dbReference>
<dbReference type="FunFam" id="3.30.420.40:FF:000359">
    <property type="entry name" value="tRNA N6-adenosine threonylcarbamoyltransferase"/>
    <property type="match status" value="1"/>
</dbReference>
<dbReference type="Gene3D" id="3.30.420.40">
    <property type="match status" value="2"/>
</dbReference>
<dbReference type="HAMAP" id="MF_01445">
    <property type="entry name" value="TsaD"/>
    <property type="match status" value="1"/>
</dbReference>
<dbReference type="InterPro" id="IPR043129">
    <property type="entry name" value="ATPase_NBD"/>
</dbReference>
<dbReference type="InterPro" id="IPR000905">
    <property type="entry name" value="Gcp-like_dom"/>
</dbReference>
<dbReference type="InterPro" id="IPR017861">
    <property type="entry name" value="KAE1/TsaD"/>
</dbReference>
<dbReference type="InterPro" id="IPR017860">
    <property type="entry name" value="Peptidase_M22_CS"/>
</dbReference>
<dbReference type="InterPro" id="IPR022450">
    <property type="entry name" value="TsaD"/>
</dbReference>
<dbReference type="NCBIfam" id="TIGR00329">
    <property type="entry name" value="gcp_kae1"/>
    <property type="match status" value="1"/>
</dbReference>
<dbReference type="NCBIfam" id="TIGR03723">
    <property type="entry name" value="T6A_TsaD_YgjD"/>
    <property type="match status" value="1"/>
</dbReference>
<dbReference type="PANTHER" id="PTHR11735">
    <property type="entry name" value="TRNA N6-ADENOSINE THREONYLCARBAMOYLTRANSFERASE"/>
    <property type="match status" value="1"/>
</dbReference>
<dbReference type="PANTHER" id="PTHR11735:SF6">
    <property type="entry name" value="TRNA N6-ADENOSINE THREONYLCARBAMOYLTRANSFERASE, MITOCHONDRIAL"/>
    <property type="match status" value="1"/>
</dbReference>
<dbReference type="Pfam" id="PF00814">
    <property type="entry name" value="TsaD"/>
    <property type="match status" value="1"/>
</dbReference>
<dbReference type="PRINTS" id="PR00789">
    <property type="entry name" value="OSIALOPTASE"/>
</dbReference>
<dbReference type="SUPFAM" id="SSF53067">
    <property type="entry name" value="Actin-like ATPase domain"/>
    <property type="match status" value="1"/>
</dbReference>
<dbReference type="PROSITE" id="PS01016">
    <property type="entry name" value="GLYCOPROTEASE"/>
    <property type="match status" value="1"/>
</dbReference>
<protein>
    <recommendedName>
        <fullName evidence="1">tRNA N6-adenosine threonylcarbamoyltransferase</fullName>
        <ecNumber evidence="1">2.3.1.234</ecNumber>
    </recommendedName>
    <alternativeName>
        <fullName evidence="1">N6-L-threonylcarbamoyladenine synthase</fullName>
        <shortName evidence="1">t(6)A synthase</shortName>
    </alternativeName>
    <alternativeName>
        <fullName evidence="1">t(6)A37 threonylcarbamoyladenosine biosynthesis protein TsaD</fullName>
    </alternativeName>
    <alternativeName>
        <fullName evidence="1">tRNA threonylcarbamoyladenosine biosynthesis protein TsaD</fullName>
    </alternativeName>
</protein>
<evidence type="ECO:0000255" key="1">
    <source>
        <dbReference type="HAMAP-Rule" id="MF_01445"/>
    </source>
</evidence>
<proteinExistence type="inferred from homology"/>
<sequence>MILSIESSCDDSSLALTRIKDAQLIAHFKISQEKHHSSYGGVVPELASRLHAENLPLLLERIKISLNKDFSKIKAIAITNQPGLSVTLIEGLMMAKALSLSLNLPLILEDHLRGHVYSLFINEKQTCMPLSVLLVSGGHSLILEARDYENIKIVATSLDDSFGESFDKVSKMLDLGYPGGPIVEKLALDYRHPNEPLMFPVPLKNSPNLAFSFSGLKNAVRLEVEKNAPNLNDEVKQKIGYHFQSAAIEHLIQQTKRYFKTKRPKIFGIVGGASQNLALRKAFENLCDAFDCKLVLAPLEFCSDNAAMIGRSSLEAYQKKRFVPLEKANISPRTLLKSFE</sequence>